<comment type="induction">
    <text evidence="2">Strongly induced by potassium chromate (K(2)Cr(2)O(7)) and cadmium chloride (CdCl(2)), but not by inducers of oxidative stress or thiol such as H(2)O(2), paraquat or diamide (PubMed:22985357). Induction by Cr and Cd requires sigF (PubMed:22985357). Probably part of the CCNA_03363 to CCNA_03366 operon.</text>
</comment>
<comment type="disruption phenotype">
    <text evidence="2">Not essential even when cells grown in the presence of its inducers dichromate or cadmium.</text>
</comment>
<comment type="similarity">
    <text evidence="1">Belongs to the UPF0276 family.</text>
</comment>
<organism>
    <name type="scientific">Caulobacter vibrioides (strain NA1000 / CB15N)</name>
    <name type="common">Caulobacter crescentus</name>
    <dbReference type="NCBI Taxonomy" id="565050"/>
    <lineage>
        <taxon>Bacteria</taxon>
        <taxon>Pseudomonadati</taxon>
        <taxon>Pseudomonadota</taxon>
        <taxon>Alphaproteobacteria</taxon>
        <taxon>Caulobacterales</taxon>
        <taxon>Caulobacteraceae</taxon>
        <taxon>Caulobacter</taxon>
    </lineage>
</organism>
<feature type="chain" id="PRO_0000440891" description="UPF0276 protein CCNA_03364">
    <location>
        <begin position="1"/>
        <end position="280"/>
    </location>
</feature>
<gene>
    <name type="ordered locus">CCNA_03364</name>
</gene>
<evidence type="ECO:0000255" key="1">
    <source>
        <dbReference type="HAMAP-Rule" id="MF_00697"/>
    </source>
</evidence>
<evidence type="ECO:0000269" key="2">
    <source>
    </source>
</evidence>
<protein>
    <recommendedName>
        <fullName evidence="1">UPF0276 protein CCNA_03364</fullName>
    </recommendedName>
</protein>
<name>Y3364_CAUVN</name>
<keyword id="KW-1185">Reference proteome</keyword>
<keyword id="KW-0346">Stress response</keyword>
<sequence>MTPSAGLGLKSQHYGDAIACDAEGLWFEVHPENYMSAGGPRLAALEAVRARRPVSLHGVGLSLAADTDPDPEHLQALKRLVDRFDPFVVSEHLAWSTHRGAHHPDLLPFPRTRAALDRICGNVARMQDALQRRVLIENPSLYLPLKGHALDEVDFLEALATRTGCGLLVDVNNVFVSAQNLGYAPETYLDALPAHAIGEIHLAGHAPDPGGSNLLIDTHGAPVAEVVWTLYARLIARIGPRPTLIERDDDIPDFAALMAERNRAVAVLASGQTAREPAHV</sequence>
<reference key="1">
    <citation type="journal article" date="2010" name="J. Bacteriol.">
        <title>The genetic basis of laboratory adaptation in Caulobacter crescentus.</title>
        <authorList>
            <person name="Marks M.E."/>
            <person name="Castro-Rojas C.M."/>
            <person name="Teiling C."/>
            <person name="Du L."/>
            <person name="Kapatral V."/>
            <person name="Walunas T.L."/>
            <person name="Crosson S."/>
        </authorList>
    </citation>
    <scope>NUCLEOTIDE SEQUENCE [LARGE SCALE GENOMIC DNA]</scope>
    <source>
        <strain>NA1000 / CB15N</strain>
    </source>
</reference>
<reference key="2">
    <citation type="journal article" date="2012" name="BMC Microbiol.">
        <title>Extracytoplasmic function (ECF) sigma factor sigmaF is involved in Caulobacter crescentus response to heavy metal stress.</title>
        <authorList>
            <person name="Kohler C."/>
            <person name="Lourenco R.F."/>
            <person name="Avelar G.M."/>
            <person name="Gomes S.L."/>
        </authorList>
    </citation>
    <scope>INDUCTION BY CHROMATE AND CADMIUM</scope>
    <scope>DISRUPTION PHENOTYPE</scope>
    <source>
        <strain>NA1000 / CB15N</strain>
    </source>
</reference>
<accession>A0A0H3CEP9</accession>
<dbReference type="EMBL" id="CP001340">
    <property type="protein sequence ID" value="ACL96829.1"/>
    <property type="molecule type" value="Genomic_DNA"/>
</dbReference>
<dbReference type="RefSeq" id="WP_010921088.1">
    <property type="nucleotide sequence ID" value="NC_011916.1"/>
</dbReference>
<dbReference type="RefSeq" id="YP_002518737.1">
    <property type="nucleotide sequence ID" value="NC_011916.1"/>
</dbReference>
<dbReference type="SMR" id="A0A0H3CEP9"/>
<dbReference type="GeneID" id="7332038"/>
<dbReference type="KEGG" id="ccs:CCNA_03364"/>
<dbReference type="PATRIC" id="fig|565050.3.peg.3278"/>
<dbReference type="HOGENOM" id="CLU_064263_0_0_5"/>
<dbReference type="OrthoDB" id="9763101at2"/>
<dbReference type="PhylomeDB" id="A0A0H3CEP9"/>
<dbReference type="Proteomes" id="UP000001364">
    <property type="component" value="Chromosome"/>
</dbReference>
<dbReference type="Gene3D" id="3.20.20.150">
    <property type="entry name" value="Divalent-metal-dependent TIM barrel enzymes"/>
    <property type="match status" value="1"/>
</dbReference>
<dbReference type="HAMAP" id="MF_00697">
    <property type="entry name" value="UPF0276"/>
    <property type="match status" value="1"/>
</dbReference>
<dbReference type="InterPro" id="IPR007801">
    <property type="entry name" value="MbnB/TglH/ChrH"/>
</dbReference>
<dbReference type="InterPro" id="IPR036237">
    <property type="entry name" value="Xyl_isomerase-like_sf"/>
</dbReference>
<dbReference type="NCBIfam" id="NF003818">
    <property type="entry name" value="PRK05409.1"/>
    <property type="match status" value="1"/>
</dbReference>
<dbReference type="PANTHER" id="PTHR42194">
    <property type="entry name" value="UPF0276 PROTEIN HI_1600"/>
    <property type="match status" value="1"/>
</dbReference>
<dbReference type="PANTHER" id="PTHR42194:SF1">
    <property type="entry name" value="UPF0276 PROTEIN HI_1600"/>
    <property type="match status" value="1"/>
</dbReference>
<dbReference type="Pfam" id="PF05114">
    <property type="entry name" value="MbnB_TglH_ChrH"/>
    <property type="match status" value="1"/>
</dbReference>
<dbReference type="SUPFAM" id="SSF51658">
    <property type="entry name" value="Xylose isomerase-like"/>
    <property type="match status" value="1"/>
</dbReference>
<proteinExistence type="evidence at transcript level"/>